<protein>
    <recommendedName>
        <fullName evidence="1">Translation initiation factor IF-1</fullName>
    </recommendedName>
</protein>
<gene>
    <name evidence="1" type="primary">infA</name>
    <name type="ordered locus">Dred_0238</name>
</gene>
<name>IF1_DESRM</name>
<feature type="chain" id="PRO_0000338814" description="Translation initiation factor IF-1">
    <location>
        <begin position="1"/>
        <end position="72"/>
    </location>
</feature>
<feature type="domain" description="S1-like" evidence="1">
    <location>
        <begin position="1"/>
        <end position="72"/>
    </location>
</feature>
<accession>A4J134</accession>
<reference key="1">
    <citation type="submission" date="2007-03" db="EMBL/GenBank/DDBJ databases">
        <title>Complete sequence of Desulfotomaculum reducens MI-1.</title>
        <authorList>
            <consortium name="US DOE Joint Genome Institute"/>
            <person name="Copeland A."/>
            <person name="Lucas S."/>
            <person name="Lapidus A."/>
            <person name="Barry K."/>
            <person name="Detter J.C."/>
            <person name="Glavina del Rio T."/>
            <person name="Hammon N."/>
            <person name="Israni S."/>
            <person name="Dalin E."/>
            <person name="Tice H."/>
            <person name="Pitluck S."/>
            <person name="Sims D."/>
            <person name="Brettin T."/>
            <person name="Bruce D."/>
            <person name="Han C."/>
            <person name="Tapia R."/>
            <person name="Schmutz J."/>
            <person name="Larimer F."/>
            <person name="Land M."/>
            <person name="Hauser L."/>
            <person name="Kyrpides N."/>
            <person name="Kim E."/>
            <person name="Tebo B.M."/>
            <person name="Richardson P."/>
        </authorList>
    </citation>
    <scope>NUCLEOTIDE SEQUENCE [LARGE SCALE GENOMIC DNA]</scope>
    <source>
        <strain>ATCC BAA-1160 / DSM 100696 / MI-1</strain>
    </source>
</reference>
<organism>
    <name type="scientific">Desulforamulus reducens (strain ATCC BAA-1160 / DSM 100696 / MI-1)</name>
    <name type="common">Desulfotomaculum reducens</name>
    <dbReference type="NCBI Taxonomy" id="349161"/>
    <lineage>
        <taxon>Bacteria</taxon>
        <taxon>Bacillati</taxon>
        <taxon>Bacillota</taxon>
        <taxon>Clostridia</taxon>
        <taxon>Eubacteriales</taxon>
        <taxon>Peptococcaceae</taxon>
        <taxon>Desulforamulus</taxon>
    </lineage>
</organism>
<proteinExistence type="inferred from homology"/>
<comment type="function">
    <text evidence="1">One of the essential components for the initiation of protein synthesis. Stabilizes the binding of IF-2 and IF-3 on the 30S subunit to which N-formylmethionyl-tRNA(fMet) subsequently binds. Helps modulate mRNA selection, yielding the 30S pre-initiation complex (PIC). Upon addition of the 50S ribosomal subunit IF-1, IF-2 and IF-3 are released leaving the mature 70S translation initiation complex.</text>
</comment>
<comment type="subunit">
    <text evidence="1">Component of the 30S ribosomal translation pre-initiation complex which assembles on the 30S ribosome in the order IF-2 and IF-3, IF-1 and N-formylmethionyl-tRNA(fMet); mRNA recruitment can occur at any time during PIC assembly.</text>
</comment>
<comment type="subcellular location">
    <subcellularLocation>
        <location evidence="1">Cytoplasm</location>
    </subcellularLocation>
</comment>
<comment type="similarity">
    <text evidence="1">Belongs to the IF-1 family.</text>
</comment>
<evidence type="ECO:0000255" key="1">
    <source>
        <dbReference type="HAMAP-Rule" id="MF_00075"/>
    </source>
</evidence>
<dbReference type="EMBL" id="CP000612">
    <property type="protein sequence ID" value="ABO48787.1"/>
    <property type="molecule type" value="Genomic_DNA"/>
</dbReference>
<dbReference type="RefSeq" id="WP_003544696.1">
    <property type="nucleotide sequence ID" value="NC_009253.1"/>
</dbReference>
<dbReference type="SMR" id="A4J134"/>
<dbReference type="STRING" id="349161.Dred_0238"/>
<dbReference type="KEGG" id="drm:Dred_0238"/>
<dbReference type="eggNOG" id="COG0361">
    <property type="taxonomic scope" value="Bacteria"/>
</dbReference>
<dbReference type="HOGENOM" id="CLU_151267_1_0_9"/>
<dbReference type="OrthoDB" id="9803250at2"/>
<dbReference type="Proteomes" id="UP000001556">
    <property type="component" value="Chromosome"/>
</dbReference>
<dbReference type="GO" id="GO:0005829">
    <property type="term" value="C:cytosol"/>
    <property type="evidence" value="ECO:0007669"/>
    <property type="project" value="TreeGrafter"/>
</dbReference>
<dbReference type="GO" id="GO:0043022">
    <property type="term" value="F:ribosome binding"/>
    <property type="evidence" value="ECO:0007669"/>
    <property type="project" value="UniProtKB-UniRule"/>
</dbReference>
<dbReference type="GO" id="GO:0019843">
    <property type="term" value="F:rRNA binding"/>
    <property type="evidence" value="ECO:0007669"/>
    <property type="project" value="UniProtKB-UniRule"/>
</dbReference>
<dbReference type="GO" id="GO:0003743">
    <property type="term" value="F:translation initiation factor activity"/>
    <property type="evidence" value="ECO:0007669"/>
    <property type="project" value="UniProtKB-UniRule"/>
</dbReference>
<dbReference type="CDD" id="cd04451">
    <property type="entry name" value="S1_IF1"/>
    <property type="match status" value="1"/>
</dbReference>
<dbReference type="FunFam" id="2.40.50.140:FF:000002">
    <property type="entry name" value="Translation initiation factor IF-1"/>
    <property type="match status" value="1"/>
</dbReference>
<dbReference type="Gene3D" id="2.40.50.140">
    <property type="entry name" value="Nucleic acid-binding proteins"/>
    <property type="match status" value="1"/>
</dbReference>
<dbReference type="HAMAP" id="MF_00075">
    <property type="entry name" value="IF_1"/>
    <property type="match status" value="1"/>
</dbReference>
<dbReference type="InterPro" id="IPR012340">
    <property type="entry name" value="NA-bd_OB-fold"/>
</dbReference>
<dbReference type="InterPro" id="IPR006196">
    <property type="entry name" value="RNA-binding_domain_S1_IF1"/>
</dbReference>
<dbReference type="InterPro" id="IPR003029">
    <property type="entry name" value="S1_domain"/>
</dbReference>
<dbReference type="InterPro" id="IPR004368">
    <property type="entry name" value="TIF_IF1"/>
</dbReference>
<dbReference type="NCBIfam" id="TIGR00008">
    <property type="entry name" value="infA"/>
    <property type="match status" value="1"/>
</dbReference>
<dbReference type="PANTHER" id="PTHR33370">
    <property type="entry name" value="TRANSLATION INITIATION FACTOR IF-1, CHLOROPLASTIC"/>
    <property type="match status" value="1"/>
</dbReference>
<dbReference type="PANTHER" id="PTHR33370:SF1">
    <property type="entry name" value="TRANSLATION INITIATION FACTOR IF-1, CHLOROPLASTIC"/>
    <property type="match status" value="1"/>
</dbReference>
<dbReference type="Pfam" id="PF01176">
    <property type="entry name" value="eIF-1a"/>
    <property type="match status" value="1"/>
</dbReference>
<dbReference type="SMART" id="SM00316">
    <property type="entry name" value="S1"/>
    <property type="match status" value="1"/>
</dbReference>
<dbReference type="SUPFAM" id="SSF50249">
    <property type="entry name" value="Nucleic acid-binding proteins"/>
    <property type="match status" value="1"/>
</dbReference>
<dbReference type="PROSITE" id="PS50832">
    <property type="entry name" value="S1_IF1_TYPE"/>
    <property type="match status" value="1"/>
</dbReference>
<sequence length="72" mass="8293">MSKNDVIEVEGKVLEPLPNAMFRVELQNGHKVLAHVSGKIRMNFIRILPGDRVTVELSPYDLTRGRIVYRFK</sequence>
<keyword id="KW-0963">Cytoplasm</keyword>
<keyword id="KW-0396">Initiation factor</keyword>
<keyword id="KW-0648">Protein biosynthesis</keyword>
<keyword id="KW-1185">Reference proteome</keyword>
<keyword id="KW-0694">RNA-binding</keyword>
<keyword id="KW-0699">rRNA-binding</keyword>